<gene>
    <name evidence="1" type="primary">rlmH</name>
    <name type="ordered locus">RPD_0568</name>
</gene>
<dbReference type="EC" id="2.1.1.177" evidence="1"/>
<dbReference type="EMBL" id="CP000283">
    <property type="protein sequence ID" value="ABE37806.1"/>
    <property type="status" value="ALT_INIT"/>
    <property type="molecule type" value="Genomic_DNA"/>
</dbReference>
<dbReference type="SMR" id="Q13DN3"/>
<dbReference type="STRING" id="316057.RPD_0568"/>
<dbReference type="KEGG" id="rpd:RPD_0568"/>
<dbReference type="eggNOG" id="COG1576">
    <property type="taxonomic scope" value="Bacteria"/>
</dbReference>
<dbReference type="HOGENOM" id="CLU_100552_1_1_5"/>
<dbReference type="BioCyc" id="RPAL316057:RPD_RS02915-MONOMER"/>
<dbReference type="Proteomes" id="UP000001818">
    <property type="component" value="Chromosome"/>
</dbReference>
<dbReference type="GO" id="GO:0005737">
    <property type="term" value="C:cytoplasm"/>
    <property type="evidence" value="ECO:0007669"/>
    <property type="project" value="UniProtKB-SubCell"/>
</dbReference>
<dbReference type="GO" id="GO:0070038">
    <property type="term" value="F:rRNA (pseudouridine-N3-)-methyltransferase activity"/>
    <property type="evidence" value="ECO:0007669"/>
    <property type="project" value="UniProtKB-UniRule"/>
</dbReference>
<dbReference type="CDD" id="cd18081">
    <property type="entry name" value="RlmH-like"/>
    <property type="match status" value="1"/>
</dbReference>
<dbReference type="Gene3D" id="3.40.1280.10">
    <property type="match status" value="1"/>
</dbReference>
<dbReference type="HAMAP" id="MF_00658">
    <property type="entry name" value="23SrRNA_methyltr_H"/>
    <property type="match status" value="1"/>
</dbReference>
<dbReference type="InterPro" id="IPR029028">
    <property type="entry name" value="Alpha/beta_knot_MTases"/>
</dbReference>
<dbReference type="InterPro" id="IPR003742">
    <property type="entry name" value="RlmH-like"/>
</dbReference>
<dbReference type="InterPro" id="IPR029026">
    <property type="entry name" value="tRNA_m1G_MTases_N"/>
</dbReference>
<dbReference type="NCBIfam" id="NF000989">
    <property type="entry name" value="PRK00103.2-3"/>
    <property type="match status" value="1"/>
</dbReference>
<dbReference type="NCBIfam" id="NF000991">
    <property type="entry name" value="PRK00103.2-5"/>
    <property type="match status" value="1"/>
</dbReference>
<dbReference type="PANTHER" id="PTHR33603">
    <property type="entry name" value="METHYLTRANSFERASE"/>
    <property type="match status" value="1"/>
</dbReference>
<dbReference type="PANTHER" id="PTHR33603:SF1">
    <property type="entry name" value="RIBOSOMAL RNA LARGE SUBUNIT METHYLTRANSFERASE H"/>
    <property type="match status" value="1"/>
</dbReference>
<dbReference type="Pfam" id="PF02590">
    <property type="entry name" value="SPOUT_MTase"/>
    <property type="match status" value="1"/>
</dbReference>
<dbReference type="PIRSF" id="PIRSF004505">
    <property type="entry name" value="MT_bac"/>
    <property type="match status" value="1"/>
</dbReference>
<dbReference type="SUPFAM" id="SSF75217">
    <property type="entry name" value="alpha/beta knot"/>
    <property type="match status" value="1"/>
</dbReference>
<proteinExistence type="inferred from homology"/>
<organism>
    <name type="scientific">Rhodopseudomonas palustris (strain BisB5)</name>
    <dbReference type="NCBI Taxonomy" id="316057"/>
    <lineage>
        <taxon>Bacteria</taxon>
        <taxon>Pseudomonadati</taxon>
        <taxon>Pseudomonadota</taxon>
        <taxon>Alphaproteobacteria</taxon>
        <taxon>Hyphomicrobiales</taxon>
        <taxon>Nitrobacteraceae</taxon>
        <taxon>Rhodopseudomonas</taxon>
    </lineage>
</organism>
<protein>
    <recommendedName>
        <fullName evidence="1">Ribosomal RNA large subunit methyltransferase H</fullName>
        <ecNumber evidence="1">2.1.1.177</ecNumber>
    </recommendedName>
    <alternativeName>
        <fullName evidence="1">23S rRNA (pseudouridine1915-N3)-methyltransferase</fullName>
    </alternativeName>
    <alternativeName>
        <fullName evidence="1">23S rRNA m3Psi1915 methyltransferase</fullName>
    </alternativeName>
    <alternativeName>
        <fullName evidence="1">rRNA (pseudouridine-N3-)-methyltransferase RlmH</fullName>
    </alternativeName>
</protein>
<sequence length="160" mass="17508">MRLTVIAIGKLKQGPERELAERYRGRFDDLGRKLGFRGLDIHEIAESRARDAAGRMAEEAAAIAALIAEGSSLVTLDERGKSVDSAAFAAQLGRWRDESVPGTIFVIGGADGLLPELRRKAKLCLSFGAATWPHQMVRVMLLEQIYRAATILAGHPYHRA</sequence>
<comment type="function">
    <text evidence="1">Specifically methylates the pseudouridine at position 1915 (m3Psi1915) in 23S rRNA.</text>
</comment>
<comment type="catalytic activity">
    <reaction evidence="1">
        <text>pseudouridine(1915) in 23S rRNA + S-adenosyl-L-methionine = N(3)-methylpseudouridine(1915) in 23S rRNA + S-adenosyl-L-homocysteine + H(+)</text>
        <dbReference type="Rhea" id="RHEA:42752"/>
        <dbReference type="Rhea" id="RHEA-COMP:10221"/>
        <dbReference type="Rhea" id="RHEA-COMP:10222"/>
        <dbReference type="ChEBI" id="CHEBI:15378"/>
        <dbReference type="ChEBI" id="CHEBI:57856"/>
        <dbReference type="ChEBI" id="CHEBI:59789"/>
        <dbReference type="ChEBI" id="CHEBI:65314"/>
        <dbReference type="ChEBI" id="CHEBI:74486"/>
        <dbReference type="EC" id="2.1.1.177"/>
    </reaction>
</comment>
<comment type="subunit">
    <text evidence="1">Homodimer.</text>
</comment>
<comment type="subcellular location">
    <subcellularLocation>
        <location evidence="1">Cytoplasm</location>
    </subcellularLocation>
</comment>
<comment type="similarity">
    <text evidence="1">Belongs to the RNA methyltransferase RlmH family.</text>
</comment>
<comment type="sequence caution" evidence="2">
    <conflict type="erroneous initiation">
        <sequence resource="EMBL-CDS" id="ABE37806"/>
    </conflict>
</comment>
<accession>Q13DN3</accession>
<reference key="1">
    <citation type="submission" date="2006-03" db="EMBL/GenBank/DDBJ databases">
        <title>Complete sequence of Rhodopseudomonas palustris BisB5.</title>
        <authorList>
            <consortium name="US DOE Joint Genome Institute"/>
            <person name="Copeland A."/>
            <person name="Lucas S."/>
            <person name="Lapidus A."/>
            <person name="Barry K."/>
            <person name="Detter J.C."/>
            <person name="Glavina del Rio T."/>
            <person name="Hammon N."/>
            <person name="Israni S."/>
            <person name="Dalin E."/>
            <person name="Tice H."/>
            <person name="Pitluck S."/>
            <person name="Chain P."/>
            <person name="Malfatti S."/>
            <person name="Shin M."/>
            <person name="Vergez L."/>
            <person name="Schmutz J."/>
            <person name="Larimer F."/>
            <person name="Land M."/>
            <person name="Hauser L."/>
            <person name="Pelletier D.A."/>
            <person name="Kyrpides N."/>
            <person name="Lykidis A."/>
            <person name="Oda Y."/>
            <person name="Harwood C.S."/>
            <person name="Richardson P."/>
        </authorList>
    </citation>
    <scope>NUCLEOTIDE SEQUENCE [LARGE SCALE GENOMIC DNA]</scope>
    <source>
        <strain>BisB5</strain>
    </source>
</reference>
<evidence type="ECO:0000255" key="1">
    <source>
        <dbReference type="HAMAP-Rule" id="MF_00658"/>
    </source>
</evidence>
<evidence type="ECO:0000305" key="2"/>
<name>RLMH_RHOPS</name>
<feature type="chain" id="PRO_0000260598" description="Ribosomal RNA large subunit methyltransferase H">
    <location>
        <begin position="1"/>
        <end position="160"/>
    </location>
</feature>
<feature type="binding site" evidence="1">
    <location>
        <position position="76"/>
    </location>
    <ligand>
        <name>S-adenosyl-L-methionine</name>
        <dbReference type="ChEBI" id="CHEBI:59789"/>
    </ligand>
</feature>
<feature type="binding site" evidence="1">
    <location>
        <position position="108"/>
    </location>
    <ligand>
        <name>S-adenosyl-L-methionine</name>
        <dbReference type="ChEBI" id="CHEBI:59789"/>
    </ligand>
</feature>
<keyword id="KW-0963">Cytoplasm</keyword>
<keyword id="KW-0489">Methyltransferase</keyword>
<keyword id="KW-0698">rRNA processing</keyword>
<keyword id="KW-0949">S-adenosyl-L-methionine</keyword>
<keyword id="KW-0808">Transferase</keyword>